<reference key="1">
    <citation type="journal article" date="1997" name="Science">
        <title>The complete genome sequence of Escherichia coli K-12.</title>
        <authorList>
            <person name="Blattner F.R."/>
            <person name="Plunkett G. III"/>
            <person name="Bloch C.A."/>
            <person name="Perna N.T."/>
            <person name="Burland V."/>
            <person name="Riley M."/>
            <person name="Collado-Vides J."/>
            <person name="Glasner J.D."/>
            <person name="Rode C.K."/>
            <person name="Mayhew G.F."/>
            <person name="Gregor J."/>
            <person name="Davis N.W."/>
            <person name="Kirkpatrick H.A."/>
            <person name="Goeden M.A."/>
            <person name="Rose D.J."/>
            <person name="Mau B."/>
            <person name="Shao Y."/>
        </authorList>
    </citation>
    <scope>NUCLEOTIDE SEQUENCE [LARGE SCALE GENOMIC DNA]</scope>
    <source>
        <strain>K12 / MG1655 / ATCC 47076</strain>
    </source>
</reference>
<reference key="2">
    <citation type="journal article" date="2006" name="Mol. Syst. Biol.">
        <title>Highly accurate genome sequences of Escherichia coli K-12 strains MG1655 and W3110.</title>
        <authorList>
            <person name="Hayashi K."/>
            <person name="Morooka N."/>
            <person name="Yamamoto Y."/>
            <person name="Fujita K."/>
            <person name="Isono K."/>
            <person name="Choi S."/>
            <person name="Ohtsubo E."/>
            <person name="Baba T."/>
            <person name="Wanner B.L."/>
            <person name="Mori H."/>
            <person name="Horiuchi T."/>
        </authorList>
    </citation>
    <scope>NUCLEOTIDE SEQUENCE [LARGE SCALE GENOMIC DNA]</scope>
    <source>
        <strain>K12 / W3110 / ATCC 27325 / DSM 5911</strain>
    </source>
</reference>
<feature type="chain" id="PRO_0000169060" description="Uncharacterized protein YebW">
    <location>
        <begin position="1"/>
        <end position="63"/>
    </location>
</feature>
<proteinExistence type="predicted"/>
<protein>
    <recommendedName>
        <fullName>Uncharacterized protein YebW</fullName>
    </recommendedName>
</protein>
<keyword id="KW-1185">Reference proteome</keyword>
<gene>
    <name type="primary">yebW</name>
    <name type="ordered locus">b1837</name>
    <name type="ordered locus">JW5303</name>
</gene>
<organism>
    <name type="scientific">Escherichia coli (strain K12)</name>
    <dbReference type="NCBI Taxonomy" id="83333"/>
    <lineage>
        <taxon>Bacteria</taxon>
        <taxon>Pseudomonadati</taxon>
        <taxon>Pseudomonadota</taxon>
        <taxon>Gammaproteobacteria</taxon>
        <taxon>Enterobacterales</taxon>
        <taxon>Enterobacteriaceae</taxon>
        <taxon>Escherichia</taxon>
    </lineage>
</organism>
<accession>P76275</accession>
<accession>Q2MB14</accession>
<sequence>MFALVLFVCYLDGGCEDIVVDVYNTEQQCLYSMSDQRIRQGGCFPIEDFIDGFWRPAQEYGDF</sequence>
<name>YEBW_ECOLI</name>
<dbReference type="EMBL" id="U00096">
    <property type="protein sequence ID" value="AAC74907.2"/>
    <property type="molecule type" value="Genomic_DNA"/>
</dbReference>
<dbReference type="EMBL" id="AP009048">
    <property type="protein sequence ID" value="BAE76542.1"/>
    <property type="molecule type" value="Genomic_DNA"/>
</dbReference>
<dbReference type="PIR" id="E64945">
    <property type="entry name" value="E64945"/>
</dbReference>
<dbReference type="RefSeq" id="NP_416351.2">
    <property type="nucleotide sequence ID" value="NC_000913.3"/>
</dbReference>
<dbReference type="RefSeq" id="WP_000457842.1">
    <property type="nucleotide sequence ID" value="NZ_SSZK01000001.1"/>
</dbReference>
<dbReference type="BioGRID" id="4260357">
    <property type="interactions" value="5"/>
</dbReference>
<dbReference type="BioGRID" id="850711">
    <property type="interactions" value="2"/>
</dbReference>
<dbReference type="FunCoup" id="P76275">
    <property type="interactions" value="12"/>
</dbReference>
<dbReference type="IntAct" id="P76275">
    <property type="interactions" value="2"/>
</dbReference>
<dbReference type="STRING" id="511145.b1837"/>
<dbReference type="PaxDb" id="511145-b1837"/>
<dbReference type="EnsemblBacteria" id="AAC74907">
    <property type="protein sequence ID" value="AAC74907"/>
    <property type="gene ID" value="b1837"/>
</dbReference>
<dbReference type="GeneID" id="946354"/>
<dbReference type="KEGG" id="ecj:JW5303"/>
<dbReference type="KEGG" id="eco:b1837"/>
<dbReference type="KEGG" id="ecoc:C3026_10465"/>
<dbReference type="PATRIC" id="fig|511145.12.peg.1915"/>
<dbReference type="EchoBASE" id="EB3779"/>
<dbReference type="eggNOG" id="ENOG5032YIX">
    <property type="taxonomic scope" value="Bacteria"/>
</dbReference>
<dbReference type="HOGENOM" id="CLU_187539_0_0_6"/>
<dbReference type="InParanoid" id="P76275"/>
<dbReference type="OMA" id="TEQQCLH"/>
<dbReference type="OrthoDB" id="6562784at2"/>
<dbReference type="PhylomeDB" id="P76275"/>
<dbReference type="BioCyc" id="EcoCyc:G7010-MONOMER"/>
<dbReference type="PRO" id="PR:P76275"/>
<dbReference type="Proteomes" id="UP000000625">
    <property type="component" value="Chromosome"/>
</dbReference>
<dbReference type="InterPro" id="IPR009954">
    <property type="entry name" value="DUF1482"/>
</dbReference>
<dbReference type="Pfam" id="PF07358">
    <property type="entry name" value="DUF1482"/>
    <property type="match status" value="1"/>
</dbReference>